<keyword id="KW-0342">GTP-binding</keyword>
<keyword id="KW-0547">Nucleotide-binding</keyword>
<keyword id="KW-1185">Reference proteome</keyword>
<gene>
    <name type="primary">arl5</name>
    <name type="synonym">arlC</name>
    <name type="ORF">DDB_G0271942</name>
</gene>
<sequence length="183" mass="20696">MGSSLSIFASIWNRFFNNAEYKVIIVGLNAAGKTTTLYKLLLDEVVSTTPTVGSNLEEFVYRNIRLLMWDLGGQDLLRSTWNQYYINTQAVILVIDSTDRARVNLIKEELFKMLAHENLKKSIILIYANKQDLKDAMSPTELSTLLSLHSIKDHDYHIQACCALTGQGLESGLDWLVSHINKS</sequence>
<name>ARL5_DICDI</name>
<comment type="function">
    <text evidence="1">May bind and exchange GTP and GDP.</text>
</comment>
<comment type="similarity">
    <text evidence="2">Belongs to the small GTPase superfamily. Arf family.</text>
</comment>
<reference key="1">
    <citation type="journal article" date="2002" name="Nature">
        <title>Sequence and analysis of chromosome 2 of Dictyostelium discoideum.</title>
        <authorList>
            <person name="Gloeckner G."/>
            <person name="Eichinger L."/>
            <person name="Szafranski K."/>
            <person name="Pachebat J.A."/>
            <person name="Bankier A.T."/>
            <person name="Dear P.H."/>
            <person name="Lehmann R."/>
            <person name="Baumgart C."/>
            <person name="Parra G."/>
            <person name="Abril J.F."/>
            <person name="Guigo R."/>
            <person name="Kumpf K."/>
            <person name="Tunggal B."/>
            <person name="Cox E.C."/>
            <person name="Quail M.A."/>
            <person name="Platzer M."/>
            <person name="Rosenthal A."/>
            <person name="Noegel A.A."/>
        </authorList>
    </citation>
    <scope>NUCLEOTIDE SEQUENCE [LARGE SCALE GENOMIC DNA]</scope>
    <source>
        <strain>AX4</strain>
    </source>
</reference>
<reference key="2">
    <citation type="journal article" date="2005" name="Nature">
        <title>The genome of the social amoeba Dictyostelium discoideum.</title>
        <authorList>
            <person name="Eichinger L."/>
            <person name="Pachebat J.A."/>
            <person name="Gloeckner G."/>
            <person name="Rajandream M.A."/>
            <person name="Sucgang R."/>
            <person name="Berriman M."/>
            <person name="Song J."/>
            <person name="Olsen R."/>
            <person name="Szafranski K."/>
            <person name="Xu Q."/>
            <person name="Tunggal B."/>
            <person name="Kummerfeld S."/>
            <person name="Madera M."/>
            <person name="Konfortov B.A."/>
            <person name="Rivero F."/>
            <person name="Bankier A.T."/>
            <person name="Lehmann R."/>
            <person name="Hamlin N."/>
            <person name="Davies R."/>
            <person name="Gaudet P."/>
            <person name="Fey P."/>
            <person name="Pilcher K."/>
            <person name="Chen G."/>
            <person name="Saunders D."/>
            <person name="Sodergren E.J."/>
            <person name="Davis P."/>
            <person name="Kerhornou A."/>
            <person name="Nie X."/>
            <person name="Hall N."/>
            <person name="Anjard C."/>
            <person name="Hemphill L."/>
            <person name="Bason N."/>
            <person name="Farbrother P."/>
            <person name="Desany B."/>
            <person name="Just E."/>
            <person name="Morio T."/>
            <person name="Rost R."/>
            <person name="Churcher C.M."/>
            <person name="Cooper J."/>
            <person name="Haydock S."/>
            <person name="van Driessche N."/>
            <person name="Cronin A."/>
            <person name="Goodhead I."/>
            <person name="Muzny D.M."/>
            <person name="Mourier T."/>
            <person name="Pain A."/>
            <person name="Lu M."/>
            <person name="Harper D."/>
            <person name="Lindsay R."/>
            <person name="Hauser H."/>
            <person name="James K.D."/>
            <person name="Quiles M."/>
            <person name="Madan Babu M."/>
            <person name="Saito T."/>
            <person name="Buchrieser C."/>
            <person name="Wardroper A."/>
            <person name="Felder M."/>
            <person name="Thangavelu M."/>
            <person name="Johnson D."/>
            <person name="Knights A."/>
            <person name="Loulseged H."/>
            <person name="Mungall K.L."/>
            <person name="Oliver K."/>
            <person name="Price C."/>
            <person name="Quail M.A."/>
            <person name="Urushihara H."/>
            <person name="Hernandez J."/>
            <person name="Rabbinowitsch E."/>
            <person name="Steffen D."/>
            <person name="Sanders M."/>
            <person name="Ma J."/>
            <person name="Kohara Y."/>
            <person name="Sharp S."/>
            <person name="Simmonds M.N."/>
            <person name="Spiegler S."/>
            <person name="Tivey A."/>
            <person name="Sugano S."/>
            <person name="White B."/>
            <person name="Walker D."/>
            <person name="Woodward J.R."/>
            <person name="Winckler T."/>
            <person name="Tanaka Y."/>
            <person name="Shaulsky G."/>
            <person name="Schleicher M."/>
            <person name="Weinstock G.M."/>
            <person name="Rosenthal A."/>
            <person name="Cox E.C."/>
            <person name="Chisholm R.L."/>
            <person name="Gibbs R.A."/>
            <person name="Loomis W.F."/>
            <person name="Platzer M."/>
            <person name="Kay R.R."/>
            <person name="Williams J.G."/>
            <person name="Dear P.H."/>
            <person name="Noegel A.A."/>
            <person name="Barrell B.G."/>
            <person name="Kuspa A."/>
        </authorList>
    </citation>
    <scope>NUCLEOTIDE SEQUENCE [LARGE SCALE GENOMIC DNA]</scope>
    <source>
        <strain>AX4</strain>
    </source>
</reference>
<protein>
    <recommendedName>
        <fullName>ADP-ribosylation factor-like protein 5</fullName>
    </recommendedName>
</protein>
<dbReference type="EMBL" id="AAFI02000007">
    <property type="protein sequence ID" value="EAL71495.1"/>
    <property type="molecule type" value="Genomic_DNA"/>
</dbReference>
<dbReference type="RefSeq" id="XP_645417.1">
    <property type="nucleotide sequence ID" value="XM_640325.1"/>
</dbReference>
<dbReference type="SMR" id="Q55AD9"/>
<dbReference type="FunCoup" id="Q55AD9">
    <property type="interactions" value="112"/>
</dbReference>
<dbReference type="STRING" id="44689.Q55AD9"/>
<dbReference type="PaxDb" id="44689-DDB0229431"/>
<dbReference type="EnsemblProtists" id="EAL71495">
    <property type="protein sequence ID" value="EAL71495"/>
    <property type="gene ID" value="DDB_G0271942"/>
</dbReference>
<dbReference type="GeneID" id="8618203"/>
<dbReference type="KEGG" id="ddi:DDB_G0271942"/>
<dbReference type="dictyBase" id="DDB_G0271942">
    <property type="gene designation" value="arl5"/>
</dbReference>
<dbReference type="VEuPathDB" id="AmoebaDB:DDB_G0271942"/>
<dbReference type="eggNOG" id="KOG0070">
    <property type="taxonomic scope" value="Eukaryota"/>
</dbReference>
<dbReference type="HOGENOM" id="CLU_040729_9_1_1"/>
<dbReference type="InParanoid" id="Q55AD9"/>
<dbReference type="OMA" id="FTCWDLG"/>
<dbReference type="PhylomeDB" id="Q55AD9"/>
<dbReference type="PRO" id="PR:Q55AD9"/>
<dbReference type="Proteomes" id="UP000002195">
    <property type="component" value="Chromosome 2"/>
</dbReference>
<dbReference type="GO" id="GO:0005737">
    <property type="term" value="C:cytoplasm"/>
    <property type="evidence" value="ECO:0000318"/>
    <property type="project" value="GO_Central"/>
</dbReference>
<dbReference type="GO" id="GO:0005802">
    <property type="term" value="C:trans-Golgi network"/>
    <property type="evidence" value="ECO:0000318"/>
    <property type="project" value="GO_Central"/>
</dbReference>
<dbReference type="GO" id="GO:0005525">
    <property type="term" value="F:GTP binding"/>
    <property type="evidence" value="ECO:0000318"/>
    <property type="project" value="GO_Central"/>
</dbReference>
<dbReference type="GO" id="GO:0003924">
    <property type="term" value="F:GTPase activity"/>
    <property type="evidence" value="ECO:0007669"/>
    <property type="project" value="InterPro"/>
</dbReference>
<dbReference type="GO" id="GO:0006886">
    <property type="term" value="P:intracellular protein transport"/>
    <property type="evidence" value="ECO:0000318"/>
    <property type="project" value="GO_Central"/>
</dbReference>
<dbReference type="GO" id="GO:1903292">
    <property type="term" value="P:protein localization to Golgi membrane"/>
    <property type="evidence" value="ECO:0000318"/>
    <property type="project" value="GO_Central"/>
</dbReference>
<dbReference type="GO" id="GO:0016192">
    <property type="term" value="P:vesicle-mediated transport"/>
    <property type="evidence" value="ECO:0000318"/>
    <property type="project" value="GO_Central"/>
</dbReference>
<dbReference type="CDD" id="cd04153">
    <property type="entry name" value="Arl5_Arl8"/>
    <property type="match status" value="1"/>
</dbReference>
<dbReference type="FunFam" id="3.40.50.300:FF:000728">
    <property type="entry name" value="ADP-ribosylation factor-like protein 5"/>
    <property type="match status" value="1"/>
</dbReference>
<dbReference type="Gene3D" id="3.40.50.300">
    <property type="entry name" value="P-loop containing nucleotide triphosphate hydrolases"/>
    <property type="match status" value="1"/>
</dbReference>
<dbReference type="InterPro" id="IPR027417">
    <property type="entry name" value="P-loop_NTPase"/>
</dbReference>
<dbReference type="InterPro" id="IPR005225">
    <property type="entry name" value="Small_GTP-bd"/>
</dbReference>
<dbReference type="InterPro" id="IPR024156">
    <property type="entry name" value="Small_GTPase_ARF"/>
</dbReference>
<dbReference type="InterPro" id="IPR006689">
    <property type="entry name" value="Small_GTPase_ARF/SAR"/>
</dbReference>
<dbReference type="NCBIfam" id="TIGR00231">
    <property type="entry name" value="small_GTP"/>
    <property type="match status" value="1"/>
</dbReference>
<dbReference type="PANTHER" id="PTHR11711">
    <property type="entry name" value="ADP RIBOSYLATION FACTOR-RELATED"/>
    <property type="match status" value="1"/>
</dbReference>
<dbReference type="Pfam" id="PF00025">
    <property type="entry name" value="Arf"/>
    <property type="match status" value="1"/>
</dbReference>
<dbReference type="PRINTS" id="PR00328">
    <property type="entry name" value="SAR1GTPBP"/>
</dbReference>
<dbReference type="SMART" id="SM00177">
    <property type="entry name" value="ARF"/>
    <property type="match status" value="1"/>
</dbReference>
<dbReference type="SMART" id="SM00178">
    <property type="entry name" value="SAR"/>
    <property type="match status" value="1"/>
</dbReference>
<dbReference type="SUPFAM" id="SSF52540">
    <property type="entry name" value="P-loop containing nucleoside triphosphate hydrolases"/>
    <property type="match status" value="1"/>
</dbReference>
<dbReference type="PROSITE" id="PS51417">
    <property type="entry name" value="ARF"/>
    <property type="match status" value="1"/>
</dbReference>
<accession>Q55AD9</accession>
<organism>
    <name type="scientific">Dictyostelium discoideum</name>
    <name type="common">Social amoeba</name>
    <dbReference type="NCBI Taxonomy" id="44689"/>
    <lineage>
        <taxon>Eukaryota</taxon>
        <taxon>Amoebozoa</taxon>
        <taxon>Evosea</taxon>
        <taxon>Eumycetozoa</taxon>
        <taxon>Dictyostelia</taxon>
        <taxon>Dictyosteliales</taxon>
        <taxon>Dictyosteliaceae</taxon>
        <taxon>Dictyostelium</taxon>
    </lineage>
</organism>
<evidence type="ECO:0000250" key="1"/>
<evidence type="ECO:0000305" key="2"/>
<feature type="chain" id="PRO_0000328148" description="ADP-ribosylation factor-like protein 5">
    <location>
        <begin position="1"/>
        <end position="183"/>
    </location>
</feature>
<feature type="binding site" evidence="1">
    <location>
        <begin position="27"/>
        <end position="34"/>
    </location>
    <ligand>
        <name>GTP</name>
        <dbReference type="ChEBI" id="CHEBI:37565"/>
    </ligand>
</feature>
<feature type="binding site" evidence="1">
    <location>
        <begin position="70"/>
        <end position="74"/>
    </location>
    <ligand>
        <name>GTP</name>
        <dbReference type="ChEBI" id="CHEBI:37565"/>
    </ligand>
</feature>
<feature type="binding site" evidence="1">
    <location>
        <begin position="129"/>
        <end position="132"/>
    </location>
    <ligand>
        <name>GTP</name>
        <dbReference type="ChEBI" id="CHEBI:37565"/>
    </ligand>
</feature>
<proteinExistence type="inferred from homology"/>